<name>G6PI_AYWBP</name>
<feature type="chain" id="PRO_0000252608" description="Glucose-6-phosphate isomerase">
    <location>
        <begin position="1"/>
        <end position="426"/>
    </location>
</feature>
<feature type="active site" description="Proton donor" evidence="1">
    <location>
        <position position="282"/>
    </location>
</feature>
<feature type="active site" evidence="1">
    <location>
        <position position="303"/>
    </location>
</feature>
<feature type="active site" evidence="1">
    <location>
        <position position="417"/>
    </location>
</feature>
<evidence type="ECO:0000255" key="1">
    <source>
        <dbReference type="HAMAP-Rule" id="MF_00473"/>
    </source>
</evidence>
<proteinExistence type="inferred from homology"/>
<dbReference type="EC" id="5.3.1.9" evidence="1"/>
<dbReference type="EMBL" id="CP000061">
    <property type="protein sequence ID" value="ABC65555.1"/>
    <property type="molecule type" value="Genomic_DNA"/>
</dbReference>
<dbReference type="RefSeq" id="WP_011412719.1">
    <property type="nucleotide sequence ID" value="NC_007716.1"/>
</dbReference>
<dbReference type="SMR" id="Q2NJ38"/>
<dbReference type="STRING" id="322098.AYWB_438"/>
<dbReference type="KEGG" id="ayw:AYWB_438"/>
<dbReference type="eggNOG" id="COG0166">
    <property type="taxonomic scope" value="Bacteria"/>
</dbReference>
<dbReference type="HOGENOM" id="CLU_037303_0_1_14"/>
<dbReference type="OrthoDB" id="140919at2"/>
<dbReference type="PhylomeDB" id="Q2NJ38"/>
<dbReference type="UniPathway" id="UPA00109">
    <property type="reaction ID" value="UER00181"/>
</dbReference>
<dbReference type="UniPathway" id="UPA00138"/>
<dbReference type="Proteomes" id="UP000001934">
    <property type="component" value="Chromosome"/>
</dbReference>
<dbReference type="GO" id="GO:0005829">
    <property type="term" value="C:cytosol"/>
    <property type="evidence" value="ECO:0007669"/>
    <property type="project" value="TreeGrafter"/>
</dbReference>
<dbReference type="GO" id="GO:0097367">
    <property type="term" value="F:carbohydrate derivative binding"/>
    <property type="evidence" value="ECO:0007669"/>
    <property type="project" value="InterPro"/>
</dbReference>
<dbReference type="GO" id="GO:0004347">
    <property type="term" value="F:glucose-6-phosphate isomerase activity"/>
    <property type="evidence" value="ECO:0007669"/>
    <property type="project" value="UniProtKB-UniRule"/>
</dbReference>
<dbReference type="GO" id="GO:0048029">
    <property type="term" value="F:monosaccharide binding"/>
    <property type="evidence" value="ECO:0007669"/>
    <property type="project" value="TreeGrafter"/>
</dbReference>
<dbReference type="GO" id="GO:0006094">
    <property type="term" value="P:gluconeogenesis"/>
    <property type="evidence" value="ECO:0007669"/>
    <property type="project" value="UniProtKB-UniRule"/>
</dbReference>
<dbReference type="GO" id="GO:0051156">
    <property type="term" value="P:glucose 6-phosphate metabolic process"/>
    <property type="evidence" value="ECO:0007669"/>
    <property type="project" value="TreeGrafter"/>
</dbReference>
<dbReference type="GO" id="GO:0006096">
    <property type="term" value="P:glycolytic process"/>
    <property type="evidence" value="ECO:0007669"/>
    <property type="project" value="UniProtKB-UniRule"/>
</dbReference>
<dbReference type="CDD" id="cd05015">
    <property type="entry name" value="SIS_PGI_1"/>
    <property type="match status" value="1"/>
</dbReference>
<dbReference type="CDD" id="cd05016">
    <property type="entry name" value="SIS_PGI_2"/>
    <property type="match status" value="1"/>
</dbReference>
<dbReference type="FunFam" id="3.40.50.10490:FF:000016">
    <property type="entry name" value="Glucose-6-phosphate isomerase"/>
    <property type="match status" value="1"/>
</dbReference>
<dbReference type="Gene3D" id="3.40.50.10490">
    <property type="entry name" value="Glucose-6-phosphate isomerase like protein, domain 1"/>
    <property type="match status" value="2"/>
</dbReference>
<dbReference type="HAMAP" id="MF_00473">
    <property type="entry name" value="G6P_isomerase"/>
    <property type="match status" value="1"/>
</dbReference>
<dbReference type="InterPro" id="IPR001672">
    <property type="entry name" value="G6P_Isomerase"/>
</dbReference>
<dbReference type="InterPro" id="IPR018189">
    <property type="entry name" value="Phosphoglucose_isomerase_CS"/>
</dbReference>
<dbReference type="InterPro" id="IPR046348">
    <property type="entry name" value="SIS_dom_sf"/>
</dbReference>
<dbReference type="InterPro" id="IPR035476">
    <property type="entry name" value="SIS_PGI_1"/>
</dbReference>
<dbReference type="InterPro" id="IPR035482">
    <property type="entry name" value="SIS_PGI_2"/>
</dbReference>
<dbReference type="NCBIfam" id="NF010697">
    <property type="entry name" value="PRK14097.1"/>
    <property type="match status" value="1"/>
</dbReference>
<dbReference type="PANTHER" id="PTHR11469">
    <property type="entry name" value="GLUCOSE-6-PHOSPHATE ISOMERASE"/>
    <property type="match status" value="1"/>
</dbReference>
<dbReference type="PANTHER" id="PTHR11469:SF1">
    <property type="entry name" value="GLUCOSE-6-PHOSPHATE ISOMERASE"/>
    <property type="match status" value="1"/>
</dbReference>
<dbReference type="Pfam" id="PF00342">
    <property type="entry name" value="PGI"/>
    <property type="match status" value="1"/>
</dbReference>
<dbReference type="PRINTS" id="PR00662">
    <property type="entry name" value="G6PISOMERASE"/>
</dbReference>
<dbReference type="SUPFAM" id="SSF53697">
    <property type="entry name" value="SIS domain"/>
    <property type="match status" value="1"/>
</dbReference>
<dbReference type="PROSITE" id="PS00765">
    <property type="entry name" value="P_GLUCOSE_ISOMERASE_1"/>
    <property type="match status" value="1"/>
</dbReference>
<dbReference type="PROSITE" id="PS00174">
    <property type="entry name" value="P_GLUCOSE_ISOMERASE_2"/>
    <property type="match status" value="1"/>
</dbReference>
<dbReference type="PROSITE" id="PS51463">
    <property type="entry name" value="P_GLUCOSE_ISOMERASE_3"/>
    <property type="match status" value="1"/>
</dbReference>
<gene>
    <name evidence="1" type="primary">pgi</name>
    <name type="ordered locus">AYWB_438</name>
</gene>
<accession>Q2NJ38</accession>
<keyword id="KW-0963">Cytoplasm</keyword>
<keyword id="KW-0312">Gluconeogenesis</keyword>
<keyword id="KW-0324">Glycolysis</keyword>
<keyword id="KW-0413">Isomerase</keyword>
<organism>
    <name type="scientific">Aster yellows witches'-broom phytoplasma (strain AYWB)</name>
    <dbReference type="NCBI Taxonomy" id="322098"/>
    <lineage>
        <taxon>Bacteria</taxon>
        <taxon>Bacillati</taxon>
        <taxon>Mycoplasmatota</taxon>
        <taxon>Mollicutes</taxon>
        <taxon>Acholeplasmatales</taxon>
        <taxon>Acholeplasmataceae</taxon>
        <taxon>Candidatus Phytoplasma</taxon>
        <taxon>16SrI (Aster yellows group)</taxon>
    </lineage>
</organism>
<comment type="function">
    <text evidence="1">Catalyzes the reversible isomerization of glucose-6-phosphate to fructose-6-phosphate.</text>
</comment>
<comment type="catalytic activity">
    <reaction evidence="1">
        <text>alpha-D-glucose 6-phosphate = beta-D-fructose 6-phosphate</text>
        <dbReference type="Rhea" id="RHEA:11816"/>
        <dbReference type="ChEBI" id="CHEBI:57634"/>
        <dbReference type="ChEBI" id="CHEBI:58225"/>
        <dbReference type="EC" id="5.3.1.9"/>
    </reaction>
</comment>
<comment type="pathway">
    <text evidence="1">Carbohydrate biosynthesis; gluconeogenesis.</text>
</comment>
<comment type="pathway">
    <text evidence="1">Carbohydrate degradation; glycolysis; D-glyceraldehyde 3-phosphate and glycerone phosphate from D-glucose: step 2/4.</text>
</comment>
<comment type="subcellular location">
    <subcellularLocation>
        <location evidence="1">Cytoplasm</location>
    </subcellularLocation>
</comment>
<comment type="similarity">
    <text evidence="1">Belongs to the GPI family.</text>
</comment>
<sequence>MLKLNLEGIYNFLDWRKHTQTYAPQIKSIHQKLHQDKQLKEKYLGWLELPLHFDFKEIEKMKQLKNFHPNLDVLVVIGIGGSYLGAKAGIEFLQTPFKKTKPEILFAGHQVSGNYLTNLLHFLKNKNWAINVISKSGTTLEPALAFRILKKEIEEKYGKQLAKNRIFVTTDSQKGVLLNLALKEGYQTFVIPDSVGGRFSVFTSVGILPFVFANLDVASMMKGALQSYHDTFQEDLLQNQAYKYALARYLFHTQQNKKMEILVSYEPNLLSFSEWWKQLFAESEGKEEKGLFVGATNNSTDLHSLGQFIQEGTKMLFETVLNVSSIKDDCVVPHILNELDNLNYVAGKTYSQINQKILQATRQAHIEGKVPNLEIVIPTLDAYHFGYLAYFFQKACAMSGLLLGINPFNQHGVEIYKQKMFALLKP</sequence>
<reference key="1">
    <citation type="journal article" date="2006" name="J. Bacteriol.">
        <title>Living with genome instability: the adaptation of phytoplasmas to diverse environments of their insect and plant hosts.</title>
        <authorList>
            <person name="Bai X."/>
            <person name="Zhang J."/>
            <person name="Ewing A."/>
            <person name="Miller S.A."/>
            <person name="Jancso Radek A."/>
            <person name="Shevchenko D.V."/>
            <person name="Tsukerman K."/>
            <person name="Walunas T."/>
            <person name="Lapidus A."/>
            <person name="Campbell J.W."/>
            <person name="Hogenhout S.A."/>
        </authorList>
    </citation>
    <scope>NUCLEOTIDE SEQUENCE [LARGE SCALE GENOMIC DNA]</scope>
    <source>
        <strain>AYWB</strain>
    </source>
</reference>
<protein>
    <recommendedName>
        <fullName evidence="1">Glucose-6-phosphate isomerase</fullName>
        <shortName evidence="1">GPI</shortName>
        <ecNumber evidence="1">5.3.1.9</ecNumber>
    </recommendedName>
    <alternativeName>
        <fullName evidence="1">Phosphoglucose isomerase</fullName>
        <shortName evidence="1">PGI</shortName>
    </alternativeName>
    <alternativeName>
        <fullName evidence="1">Phosphohexose isomerase</fullName>
        <shortName evidence="1">PHI</shortName>
    </alternativeName>
</protein>